<feature type="peptide" id="PRO_0000441360" description="Cyclotide mden-B" evidence="2">
    <location>
        <begin position="1"/>
        <end position="29"/>
    </location>
</feature>
<feature type="disulfide bond" evidence="1">
    <location>
        <begin position="5"/>
        <end position="19"/>
    </location>
</feature>
<feature type="disulfide bond" evidence="1">
    <location>
        <begin position="9"/>
        <end position="21"/>
    </location>
</feature>
<feature type="disulfide bond" evidence="1">
    <location>
        <begin position="14"/>
        <end position="26"/>
    </location>
</feature>
<feature type="cross-link" description="Cyclopeptide (Gly-Asn)" evidence="3">
    <location>
        <begin position="1"/>
        <end position="29"/>
    </location>
</feature>
<protein>
    <recommendedName>
        <fullName evidence="3">Cyclotide mden-B</fullName>
    </recommendedName>
</protein>
<reference evidence="4" key="1">
    <citation type="journal article" date="2017" name="J. Nat. Prod.">
        <title>Understanding the Diversity and Distribution of Cyclotides from Plants of Varied Genetic Origin.</title>
        <authorList>
            <person name="Ravipati A.S."/>
            <person name="Poth A.G."/>
            <person name="Troeira Henriques S."/>
            <person name="Bhandari M."/>
            <person name="Huang Y.H."/>
            <person name="Nino J."/>
            <person name="Colgrave M.L."/>
            <person name="Craik D.J."/>
        </authorList>
    </citation>
    <scope>PROTEIN SEQUENCE</scope>
</reference>
<dbReference type="SMR" id="C0HKI5"/>
<dbReference type="GO" id="GO:0006952">
    <property type="term" value="P:defense response"/>
    <property type="evidence" value="ECO:0007669"/>
    <property type="project" value="UniProtKB-KW"/>
</dbReference>
<dbReference type="InterPro" id="IPR005535">
    <property type="entry name" value="Cyclotide"/>
</dbReference>
<dbReference type="InterPro" id="IPR012324">
    <property type="entry name" value="Cyclotide_moebius_CS"/>
</dbReference>
<dbReference type="InterPro" id="IPR036146">
    <property type="entry name" value="Cyclotide_sf"/>
</dbReference>
<dbReference type="Pfam" id="PF03784">
    <property type="entry name" value="Cyclotide"/>
    <property type="match status" value="1"/>
</dbReference>
<dbReference type="PIRSF" id="PIRSF037891">
    <property type="entry name" value="Cycloviolacin"/>
    <property type="match status" value="1"/>
</dbReference>
<dbReference type="SUPFAM" id="SSF57038">
    <property type="entry name" value="Cyclotides"/>
    <property type="match status" value="1"/>
</dbReference>
<dbReference type="PROSITE" id="PS51052">
    <property type="entry name" value="CYCLOTIDE"/>
    <property type="match status" value="1"/>
</dbReference>
<dbReference type="PROSITE" id="PS60009">
    <property type="entry name" value="CYCLOTIDE_MOEBIUS"/>
    <property type="match status" value="1"/>
</dbReference>
<keyword id="KW-0903">Direct protein sequencing</keyword>
<keyword id="KW-1015">Disulfide bond</keyword>
<keyword id="KW-0611">Plant defense</keyword>
<evidence type="ECO:0000255" key="1">
    <source>
        <dbReference type="PROSITE-ProRule" id="PRU00395"/>
    </source>
</evidence>
<evidence type="ECO:0000269" key="2">
    <source>
    </source>
</evidence>
<evidence type="ECO:0000303" key="3">
    <source>
    </source>
</evidence>
<evidence type="ECO:0000305" key="4"/>
<organism evidence="3">
    <name type="scientific">Melicytus dentatus</name>
    <name type="common">Tree violet</name>
    <dbReference type="NCBI Taxonomy" id="491106"/>
    <lineage>
        <taxon>Eukaryota</taxon>
        <taxon>Viridiplantae</taxon>
        <taxon>Streptophyta</taxon>
        <taxon>Embryophyta</taxon>
        <taxon>Tracheophyta</taxon>
        <taxon>Spermatophyta</taxon>
        <taxon>Magnoliopsida</taxon>
        <taxon>eudicotyledons</taxon>
        <taxon>Gunneridae</taxon>
        <taxon>Pentapetalae</taxon>
        <taxon>rosids</taxon>
        <taxon>fabids</taxon>
        <taxon>Malpighiales</taxon>
        <taxon>Violaceae</taxon>
        <taxon>Melicytus</taxon>
    </lineage>
</organism>
<sequence>GLPICGETCFTGKCYTPGCTCSYPICKKN</sequence>
<proteinExistence type="evidence at protein level"/>
<accession>C0HKI5</accession>
<comment type="function">
    <text evidence="1">Probably participates in a plant defense mechanism.</text>
</comment>
<comment type="domain">
    <text evidence="4">The presence of a 'disulfide through disulfide knot' structurally defines this protein as a knottin.</text>
</comment>
<comment type="PTM">
    <text evidence="1">This is a cyclic peptide.</text>
</comment>
<comment type="similarity">
    <text evidence="1">Belongs to the cyclotide family. Moebius subfamily.</text>
</comment>
<comment type="caution">
    <text evidence="1">This peptide is cyclic. The start position was chosen by similarity to Oak1 (kalata B1) for which the DNA sequence is known.</text>
</comment>
<name>CYMEB_MELDN</name>